<dbReference type="EC" id="2.4.3.1" evidence="2"/>
<dbReference type="EMBL" id="AJ627629">
    <property type="protein sequence ID" value="CAF29497.1"/>
    <property type="molecule type" value="mRNA"/>
</dbReference>
<dbReference type="RefSeq" id="NP_001161219.1">
    <property type="nucleotide sequence ID" value="NM_001167747.1"/>
</dbReference>
<dbReference type="SMR" id="Q701R0"/>
<dbReference type="FunCoup" id="Q701R0">
    <property type="interactions" value="56"/>
</dbReference>
<dbReference type="STRING" id="9031.ENSGALP00000035783"/>
<dbReference type="CAZy" id="GT29">
    <property type="family name" value="Glycosyltransferase Family 29"/>
</dbReference>
<dbReference type="GlyCosmos" id="Q701R0">
    <property type="glycosylation" value="3 sites, No reported glycans"/>
</dbReference>
<dbReference type="GlyGen" id="Q701R0">
    <property type="glycosylation" value="3 sites"/>
</dbReference>
<dbReference type="PaxDb" id="9031-ENSGALP00000027075"/>
<dbReference type="GeneID" id="403122"/>
<dbReference type="KEGG" id="gga:403122"/>
<dbReference type="CTD" id="84620"/>
<dbReference type="VEuPathDB" id="HostDB:geneid_403122"/>
<dbReference type="eggNOG" id="KOG2692">
    <property type="taxonomic scope" value="Eukaryota"/>
</dbReference>
<dbReference type="InParanoid" id="Q701R0"/>
<dbReference type="OrthoDB" id="10264956at2759"/>
<dbReference type="PhylomeDB" id="Q701R0"/>
<dbReference type="BRENDA" id="2.4.99.1">
    <property type="organism ID" value="1306"/>
</dbReference>
<dbReference type="PRO" id="PR:Q701R0"/>
<dbReference type="Proteomes" id="UP000000539">
    <property type="component" value="Unassembled WGS sequence"/>
</dbReference>
<dbReference type="GO" id="GO:0005794">
    <property type="term" value="C:Golgi apparatus"/>
    <property type="evidence" value="ECO:0000318"/>
    <property type="project" value="GO_Central"/>
</dbReference>
<dbReference type="GO" id="GO:0032580">
    <property type="term" value="C:Golgi cisterna membrane"/>
    <property type="evidence" value="ECO:0007669"/>
    <property type="project" value="UniProtKB-SubCell"/>
</dbReference>
<dbReference type="GO" id="GO:0003835">
    <property type="term" value="F:beta-galactoside alpha-2,6-sialyltransferase activity"/>
    <property type="evidence" value="ECO:0000318"/>
    <property type="project" value="GO_Central"/>
</dbReference>
<dbReference type="GO" id="GO:0006486">
    <property type="term" value="P:protein glycosylation"/>
    <property type="evidence" value="ECO:0007669"/>
    <property type="project" value="InterPro"/>
</dbReference>
<dbReference type="GO" id="GO:0097503">
    <property type="term" value="P:sialylation"/>
    <property type="evidence" value="ECO:0000318"/>
    <property type="project" value="GO_Central"/>
</dbReference>
<dbReference type="CDD" id="cd23986">
    <property type="entry name" value="GT29_ST6GAL2"/>
    <property type="match status" value="1"/>
</dbReference>
<dbReference type="FunFam" id="3.90.1480.20:FF:000010">
    <property type="entry name" value="ST6 beta-galactoside alpha-2,6-sialyltransferase 2"/>
    <property type="match status" value="1"/>
</dbReference>
<dbReference type="Gene3D" id="3.90.1480.20">
    <property type="entry name" value="Glycosyl transferase family 29"/>
    <property type="match status" value="1"/>
</dbReference>
<dbReference type="InterPro" id="IPR001675">
    <property type="entry name" value="Glyco_trans_29"/>
</dbReference>
<dbReference type="InterPro" id="IPR038578">
    <property type="entry name" value="GT29-like_sf"/>
</dbReference>
<dbReference type="PANTHER" id="PTHR46059">
    <property type="entry name" value="BETA-GALACTOSIDE ALPHA-2,6-SIALYLTRANSFERASE"/>
    <property type="match status" value="1"/>
</dbReference>
<dbReference type="PANTHER" id="PTHR46059:SF3">
    <property type="entry name" value="BETA-GALACTOSIDE ALPHA-2,6-SIALYLTRANSFERASE 2"/>
    <property type="match status" value="1"/>
</dbReference>
<dbReference type="Pfam" id="PF00777">
    <property type="entry name" value="Glyco_transf_29"/>
    <property type="match status" value="1"/>
</dbReference>
<feature type="chain" id="PRO_0000314789" description="Beta-galactoside alpha-2,6-sialyltransferase 2">
    <location>
        <begin position="1"/>
        <end position="528"/>
    </location>
</feature>
<feature type="topological domain" description="Cytoplasmic" evidence="3">
    <location>
        <begin position="1"/>
        <end position="10"/>
    </location>
</feature>
<feature type="transmembrane region" description="Helical; Signal-anchor for type II membrane protein" evidence="3">
    <location>
        <begin position="11"/>
        <end position="31"/>
    </location>
</feature>
<feature type="topological domain" description="Lumenal" evidence="3">
    <location>
        <begin position="32"/>
        <end position="528"/>
    </location>
</feature>
<feature type="glycosylation site" description="N-linked (GlcNAc...) asparagine" evidence="3">
    <location>
        <position position="167"/>
    </location>
</feature>
<feature type="glycosylation site" description="N-linked (GlcNAc...) asparagine" evidence="3">
    <location>
        <position position="308"/>
    </location>
</feature>
<feature type="glycosylation site" description="N-linked (GlcNAc...) asparagine" evidence="3">
    <location>
        <position position="338"/>
    </location>
</feature>
<feature type="disulfide bond" evidence="1">
    <location>
        <begin position="254"/>
        <end position="519"/>
    </location>
</feature>
<feature type="disulfide bond" evidence="1">
    <location>
        <begin position="297"/>
        <end position="448"/>
    </location>
</feature>
<feature type="disulfide bond" evidence="1">
    <location>
        <begin position="466"/>
        <end position="477"/>
    </location>
</feature>
<accession>Q701R0</accession>
<evidence type="ECO:0000250" key="1"/>
<evidence type="ECO:0000250" key="2">
    <source>
        <dbReference type="UniProtKB" id="Q96JF0"/>
    </source>
</evidence>
<evidence type="ECO:0000255" key="3"/>
<evidence type="ECO:0000305" key="4"/>
<sequence>MKPNLKQWKQLMLFGIFAWGLLFLVIFIYFTDSNSAEPVPSSFSYIETKRLLPLQGKQRVIMGAIHDPSFSEAIDGNEVLLNEDLLDTFKSETGSIKKWTDLEDAFRSEDEFFPSQIGRKSKSAFYQVNDDYLFAAGQPMSHNSFQEIAKFISADEDNPKESILQNNWSRQRRMRRRSTKHRRSQMLDESDDWDGLYSTMSKSFLYKLWKGDVSSKMLNPRLQKAMKDYLSTNKHGVRFKGKRNSKLTGDQLFCELKERVDVKTIDGKEAPFSTLGWEKHVPQIPLGKLYTHGFGSCAVVMSAGAILNSSLGDEIDSHDAVLRFNSAPTRGYEKDVGNKTTMRIINSQILTNPNHHFVDSSLYKDVILVAWDPAPYSANLNWYKKPDYNLFTPYVQHRKKNPNQPFYILHPKFIWQLWDIIQENTKEKIQPNPPSSGFIGILIMMSMCNEVHVYEYIPSVRQTDLCHYHELYYDAACTLGAYHPLLYEKLLVQRMNKGLQDDLYRKGKVILPGFKSVKCPERNNFPPL</sequence>
<protein>
    <recommendedName>
        <fullName>Beta-galactoside alpha-2,6-sialyltransferase 2</fullName>
        <shortName>Alpha 2,6-ST 2</shortName>
        <ecNumber evidence="2">2.4.3.1</ecNumber>
    </recommendedName>
    <alternativeName>
        <fullName>CMP-N-acetylneuraminate-beta-galactosamide-alpha-2,6-sialyltransferase 2</fullName>
    </alternativeName>
    <alternativeName>
        <fullName>ST6Gal II</fullName>
        <shortName>ST6GalII</shortName>
    </alternativeName>
    <alternativeName>
        <fullName>Sialyltransferase 2</fullName>
    </alternativeName>
</protein>
<name>SIAT2_CHICK</name>
<comment type="function">
    <text evidence="1">Transfers sialic acid from the donor of substrate CMP-sialic acid to galactose containing acceptor substrates.</text>
</comment>
<comment type="catalytic activity">
    <reaction evidence="2">
        <text>a beta-D-galactoside + CMP-N-acetyl-beta-neuraminate = an N-acetyl-alpha-neuraminyl-(2-&gt;6)-beta-D-galactosyl derivative + CMP + H(+)</text>
        <dbReference type="Rhea" id="RHEA:52104"/>
        <dbReference type="ChEBI" id="CHEBI:15378"/>
        <dbReference type="ChEBI" id="CHEBI:28034"/>
        <dbReference type="ChEBI" id="CHEBI:57812"/>
        <dbReference type="ChEBI" id="CHEBI:60377"/>
        <dbReference type="ChEBI" id="CHEBI:136398"/>
        <dbReference type="EC" id="2.4.3.1"/>
    </reaction>
</comment>
<comment type="subcellular location">
    <subcellularLocation>
        <location evidence="1">Golgi apparatus</location>
        <location evidence="1">Golgi stack membrane</location>
        <topology evidence="1">Single-pass type II membrane protein</topology>
    </subcellularLocation>
</comment>
<comment type="similarity">
    <text evidence="4">Belongs to the glycosyltransferase 29 family.</text>
</comment>
<reference key="1">
    <citation type="journal article" date="2005" name="Glycobiology">
        <title>The animal sialyltransferases and sialyltransferase-related genes: a phylogenetic approach.</title>
        <authorList>
            <person name="Harduin-Lepers A."/>
            <person name="Mollicone R."/>
            <person name="Delannoy P."/>
            <person name="Oriol R."/>
        </authorList>
    </citation>
    <scope>NUCLEOTIDE SEQUENCE [MRNA]</scope>
</reference>
<proteinExistence type="evidence at transcript level"/>
<organism>
    <name type="scientific">Gallus gallus</name>
    <name type="common">Chicken</name>
    <dbReference type="NCBI Taxonomy" id="9031"/>
    <lineage>
        <taxon>Eukaryota</taxon>
        <taxon>Metazoa</taxon>
        <taxon>Chordata</taxon>
        <taxon>Craniata</taxon>
        <taxon>Vertebrata</taxon>
        <taxon>Euteleostomi</taxon>
        <taxon>Archelosauria</taxon>
        <taxon>Archosauria</taxon>
        <taxon>Dinosauria</taxon>
        <taxon>Saurischia</taxon>
        <taxon>Theropoda</taxon>
        <taxon>Coelurosauria</taxon>
        <taxon>Aves</taxon>
        <taxon>Neognathae</taxon>
        <taxon>Galloanserae</taxon>
        <taxon>Galliformes</taxon>
        <taxon>Phasianidae</taxon>
        <taxon>Phasianinae</taxon>
        <taxon>Gallus</taxon>
    </lineage>
</organism>
<keyword id="KW-1015">Disulfide bond</keyword>
<keyword id="KW-0325">Glycoprotein</keyword>
<keyword id="KW-0328">Glycosyltransferase</keyword>
<keyword id="KW-0333">Golgi apparatus</keyword>
<keyword id="KW-0472">Membrane</keyword>
<keyword id="KW-1185">Reference proteome</keyword>
<keyword id="KW-0735">Signal-anchor</keyword>
<keyword id="KW-0808">Transferase</keyword>
<keyword id="KW-0812">Transmembrane</keyword>
<keyword id="KW-1133">Transmembrane helix</keyword>
<gene>
    <name type="primary">ST6GAL2</name>
</gene>